<sequence length="560" mass="62013">MNTQILVFIACVLIKAKGDKICLGHHAVANGTKVNTLTERGIEVVNATETVETANIGKISTQGKRPTDLGQCGLLGTLIGPPQCDQFLEFESDLIIERREGNDICYPGKFTNEESLRQILRGSGGIDKESMGFTYSGIRTNGATSACRRSGASFYAEMKWLLSNSDNAAFPQMTKSYRNPRSKPALIVWGIHHSGSTTEQTKLYGSGNKLITVESSKYQQSFTPSPGARPQVNGQSGRIDFHWLLLDPNDTVTFTFNGAFIAPDRASFLRGESLGIQSDVPLDSNCGGNCFHSGGTIVSSLPFQNINSRTVGKVPRYVRQPSLLLATGMRNVPENPKTRGLFGAIAGFIENGWEGLIDGWYGFRHQNAQGEGTAADYKSTQSAIDQITGKLNRLIDKTNQQFELIDNAFSEIEQQIGNVINWTRDSMTEVWSYNAELLVAMENQHTIDLADSEMNKLYERVRKQLRENAEEDGTGCFEIFHKCDDQCMASIRNNTYDHTQYRAESLQNRIQIDPVKLSSGYKDIILWFSFGASCFLLLAIAMGLVFICIKNGNMRCTICI</sequence>
<gene>
    <name evidence="1" type="primary">HA</name>
</gene>
<reference key="1">
    <citation type="journal article" date="1990" name="Virology">
        <title>Structural variation occurring in the hemagglutinin of influenza virus A/turkey/Oregon/71 during adaptation to different cell types.</title>
        <authorList>
            <person name="Orlich M."/>
            <person name="Khatchikian D."/>
            <person name="Teigler A."/>
            <person name="Rott R."/>
        </authorList>
    </citation>
    <scope>NUCLEOTIDE SEQUENCE [GENOMIC RNA]</scope>
</reference>
<reference key="2">
    <citation type="journal article" date="1981" name="Proc. Natl. Acad. Sci. U.S.A.">
        <title>Sequence relationships among the hemagglutinin genes of 12 subtypes of influenza A virus.</title>
        <authorList>
            <person name="Air G.M."/>
        </authorList>
    </citation>
    <scope>NUCLEOTIDE SEQUENCE [GENOMIC RNA] OF 1-108</scope>
</reference>
<reference key="3">
    <citation type="submission" date="2006-08" db="EMBL/GenBank/DDBJ databases">
        <title>Establishment of gene library of all haemagglutinin (HA) and neuraminidase (NA) subtypes for the control of influenza A virus infection.</title>
        <authorList>
            <person name="Kida H."/>
            <person name="Sakoda Y."/>
        </authorList>
    </citation>
    <scope>NUCLEOTIDE SEQUENCE [GENOMIC RNA]</scope>
</reference>
<accession>P03458</accession>
<accession>Q0PCG7</accession>
<dbReference type="EMBL" id="M31689">
    <property type="protein sequence ID" value="AAA43087.1"/>
    <property type="molecule type" value="Genomic_RNA"/>
</dbReference>
<dbReference type="EMBL" id="J02164">
    <property type="protein sequence ID" value="AAA43192.1"/>
    <property type="molecule type" value="Genomic_RNA"/>
</dbReference>
<dbReference type="EMBL" id="AB269693">
    <property type="protein sequence ID" value="BAF02931.2"/>
    <property type="molecule type" value="Genomic_RNA"/>
</dbReference>
<dbReference type="PIR" id="A04069">
    <property type="entry name" value="A04069"/>
</dbReference>
<dbReference type="PIR" id="A34772">
    <property type="entry name" value="HMIVT7"/>
</dbReference>
<dbReference type="SMR" id="P03458"/>
<dbReference type="GlyCosmos" id="P03458">
    <property type="glycosylation" value="5 sites, No reported glycans"/>
</dbReference>
<dbReference type="GO" id="GO:0020002">
    <property type="term" value="C:host cell plasma membrane"/>
    <property type="evidence" value="ECO:0007669"/>
    <property type="project" value="UniProtKB-SubCell"/>
</dbReference>
<dbReference type="GO" id="GO:0016020">
    <property type="term" value="C:membrane"/>
    <property type="evidence" value="ECO:0007669"/>
    <property type="project" value="UniProtKB-UniRule"/>
</dbReference>
<dbReference type="GO" id="GO:0019031">
    <property type="term" value="C:viral envelope"/>
    <property type="evidence" value="ECO:0007669"/>
    <property type="project" value="UniProtKB-UniRule"/>
</dbReference>
<dbReference type="GO" id="GO:0055036">
    <property type="term" value="C:virion membrane"/>
    <property type="evidence" value="ECO:0007669"/>
    <property type="project" value="UniProtKB-SubCell"/>
</dbReference>
<dbReference type="GO" id="GO:0046789">
    <property type="term" value="F:host cell surface receptor binding"/>
    <property type="evidence" value="ECO:0007669"/>
    <property type="project" value="UniProtKB-UniRule"/>
</dbReference>
<dbReference type="GO" id="GO:0075512">
    <property type="term" value="P:clathrin-dependent endocytosis of virus by host cell"/>
    <property type="evidence" value="ECO:0007669"/>
    <property type="project" value="UniProtKB-UniRule"/>
</dbReference>
<dbReference type="GO" id="GO:0039654">
    <property type="term" value="P:fusion of virus membrane with host endosome membrane"/>
    <property type="evidence" value="ECO:0007669"/>
    <property type="project" value="UniProtKB-UniRule"/>
</dbReference>
<dbReference type="GO" id="GO:0019064">
    <property type="term" value="P:fusion of virus membrane with host plasma membrane"/>
    <property type="evidence" value="ECO:0007669"/>
    <property type="project" value="InterPro"/>
</dbReference>
<dbReference type="GO" id="GO:0046761">
    <property type="term" value="P:viral budding from plasma membrane"/>
    <property type="evidence" value="ECO:0007669"/>
    <property type="project" value="UniProtKB-UniRule"/>
</dbReference>
<dbReference type="GO" id="GO:0019062">
    <property type="term" value="P:virion attachment to host cell"/>
    <property type="evidence" value="ECO:0007669"/>
    <property type="project" value="UniProtKB-KW"/>
</dbReference>
<dbReference type="Gene3D" id="3.90.20.10">
    <property type="match status" value="1"/>
</dbReference>
<dbReference type="Gene3D" id="3.90.209.20">
    <property type="match status" value="1"/>
</dbReference>
<dbReference type="HAMAP" id="MF_04072">
    <property type="entry name" value="INFV_HEMA"/>
    <property type="match status" value="1"/>
</dbReference>
<dbReference type="InterPro" id="IPR008980">
    <property type="entry name" value="Capsid_hemagglutn"/>
</dbReference>
<dbReference type="InterPro" id="IPR013828">
    <property type="entry name" value="Hemagglutn_HA1_a/b_dom_sf"/>
</dbReference>
<dbReference type="InterPro" id="IPR000149">
    <property type="entry name" value="Hemagglutn_influenz_A"/>
</dbReference>
<dbReference type="InterPro" id="IPR001364">
    <property type="entry name" value="Hemagglutn_influenz_A/B"/>
</dbReference>
<dbReference type="Pfam" id="PF00509">
    <property type="entry name" value="Hemagglutinin"/>
    <property type="match status" value="1"/>
</dbReference>
<dbReference type="PRINTS" id="PR00330">
    <property type="entry name" value="HEMAGGLUTN1"/>
</dbReference>
<dbReference type="PRINTS" id="PR00329">
    <property type="entry name" value="HEMAGGLUTN12"/>
</dbReference>
<dbReference type="SUPFAM" id="SSF58064">
    <property type="entry name" value="Influenza hemagglutinin (stalk)"/>
    <property type="match status" value="1"/>
</dbReference>
<dbReference type="SUPFAM" id="SSF49818">
    <property type="entry name" value="Viral protein domain"/>
    <property type="match status" value="1"/>
</dbReference>
<organism>
    <name type="scientific">Influenza A virus (strain A/Turkey/Oregon/1971 H7N3)</name>
    <dbReference type="NCBI Taxonomy" id="385636"/>
    <lineage>
        <taxon>Viruses</taxon>
        <taxon>Riboviria</taxon>
        <taxon>Orthornavirae</taxon>
        <taxon>Negarnaviricota</taxon>
        <taxon>Polyploviricotina</taxon>
        <taxon>Insthoviricetes</taxon>
        <taxon>Articulavirales</taxon>
        <taxon>Orthomyxoviridae</taxon>
        <taxon>Alphainfluenzavirus</taxon>
        <taxon>Alphainfluenzavirus influenzae</taxon>
        <taxon>Influenza A virus</taxon>
    </lineage>
</organism>
<protein>
    <recommendedName>
        <fullName evidence="1">Hemagglutinin</fullName>
    </recommendedName>
    <component>
        <recommendedName>
            <fullName evidence="1">Hemagglutinin HA1 chain</fullName>
        </recommendedName>
    </component>
    <component>
        <recommendedName>
            <fullName evidence="1">Hemagglutinin HA2 chain</fullName>
        </recommendedName>
    </component>
</protein>
<evidence type="ECO:0000255" key="1">
    <source>
        <dbReference type="HAMAP-Rule" id="MF_04072"/>
    </source>
</evidence>
<evidence type="ECO:0000305" key="2"/>
<organismHost>
    <name type="scientific">Aves</name>
    <dbReference type="NCBI Taxonomy" id="8782"/>
</organismHost>
<comment type="function">
    <text>Binds to sialic acid-containing receptors on the cell surface, bringing about the attachment of the virus particle to the cell. This attachment induces virion internalization of about two third of the virus particles through clathrin-dependent endocytosis and about one third through a clathrin- and caveolin-independent pathway. Plays a major role in the determination of host range restriction and virulence. Class I viral fusion protein. Responsible for penetration of the virus into the cell cytoplasm by mediating the fusion of the membrane of the endocytosed virus particle with the endosomal membrane. Low pH in endosomes induces an irreversible conformational change in HA2, releasing the fusion hydrophobic peptide. Several trimers are required to form a competent fusion pore.</text>
</comment>
<comment type="function">
    <text evidence="1">Binds to sialic acid-containing receptors on the cell surface, bringing about the attachment of the virus particle to the cell. This attachment induces virion internalization either through clathrin-dependent endocytosis or through clathrin- and caveolin-independent pathway. Plays a major role in the determination of host range restriction and virulence. Class I viral fusion protein. Responsible for penetration of the virus into the cell cytoplasm by mediating the fusion of the membrane of the endocytosed virus particle with the endosomal membrane. Low pH in endosomes induces an irreversible conformational change in HA2, releasing the fusion hydrophobic peptide. Several trimers are required to form a competent fusion pore.</text>
</comment>
<comment type="subunit">
    <text evidence="1">Homotrimer of disulfide-linked HA1-HA2.</text>
</comment>
<comment type="subcellular location">
    <subcellularLocation>
        <location evidence="1">Virion membrane</location>
        <topology evidence="1">Single-pass type I membrane protein</topology>
    </subcellularLocation>
    <subcellularLocation>
        <location evidence="1">Host apical cell membrane</location>
        <topology evidence="1">Single-pass type I membrane protein</topology>
    </subcellularLocation>
    <text evidence="1">Targeted to the apical plasma membrane in epithelial polarized cells through a signal present in the transmembrane domain. Associated with glycosphingolipid- and cholesterol-enriched detergent-resistant lipid rafts.</text>
</comment>
<comment type="PTM">
    <text evidence="1">Palmitoylated.</text>
</comment>
<comment type="PTM">
    <text evidence="1">In natural infection, inactive HA is matured into HA1 and HA2 outside the cell by one or more trypsin-like, arginine-specific endoprotease secreted by the bronchial epithelial cells. One identified protease that may be involved in this process is secreted in lungs by club cells.</text>
</comment>
<comment type="miscellaneous">
    <text>Major glycoprotein, comprises over 80% of the envelope proteins present in virus particle.</text>
</comment>
<comment type="miscellaneous">
    <text>The extent of infection into host organism is determined by HA. Influenza viruses bud from the apical surface of polarized epithelial cells (e.g. bronchial epithelial cells) into lumen of lungs and are therefore usually pneumotropic. The reason is that HA is cleaved by tryptase clara which is restricted to lungs. However, HAs of H5 and H7 pantropic avian viruses subtypes can be cleaved by furin and subtilisin-type enzymes, allowing the virus to grow in other organs than lungs.</text>
</comment>
<comment type="miscellaneous">
    <text evidence="2">The influenza A genome consist of 8 RNA segments. Genetic variation of hemagglutinin and/or neuraminidase genes results in the emergence of new influenza strains. The mechanism of variation can be the result of point mutations or the result of genetic reassortment between segments of two different strains.</text>
</comment>
<comment type="similarity">
    <text evidence="1">Belongs to the influenza viruses hemagglutinin family.</text>
</comment>
<feature type="signal peptide" evidence="1">
    <location>
        <begin position="1"/>
        <end position="18"/>
    </location>
</feature>
<feature type="chain" id="PRO_0000440421" description="Hemagglutinin" evidence="1">
    <location>
        <begin position="19"/>
        <end position="560"/>
    </location>
</feature>
<feature type="chain" id="PRO_0000039056" description="Hemagglutinin HA1 chain" evidence="1">
    <location>
        <begin position="19"/>
        <end position="338"/>
    </location>
</feature>
<feature type="chain" id="PRO_0000039057" description="Hemagglutinin HA2 chain" evidence="1">
    <location>
        <begin position="340"/>
        <end position="560"/>
    </location>
</feature>
<feature type="topological domain" description="Extracellular" evidence="1">
    <location>
        <begin position="19"/>
        <end position="523"/>
    </location>
</feature>
<feature type="transmembrane region" description="Helical" evidence="1">
    <location>
        <begin position="524"/>
        <end position="544"/>
    </location>
</feature>
<feature type="topological domain" description="Cytoplasmic" evidence="1">
    <location>
        <begin position="545"/>
        <end position="560"/>
    </location>
</feature>
<feature type="site" description="Cleavage; by host" evidence="1">
    <location>
        <begin position="339"/>
        <end position="340"/>
    </location>
</feature>
<feature type="lipid moiety-binding region" description="S-palmitoyl cysteine; by host" evidence="1">
    <location>
        <position position="556"/>
    </location>
</feature>
<feature type="lipid moiety-binding region" description="S-palmitoyl cysteine; by host" evidence="1">
    <location>
        <position position="559"/>
    </location>
</feature>
<feature type="glycosylation site" description="N-linked (GlcNAc...) asparagine; by host" evidence="1">
    <location>
        <position position="30"/>
    </location>
</feature>
<feature type="glycosylation site" description="N-linked (GlcNAc...) asparagine; by host" evidence="1">
    <location>
        <position position="46"/>
    </location>
</feature>
<feature type="glycosylation site" description="N-linked (GlcNAc...) asparagine; by host" evidence="1">
    <location>
        <position position="249"/>
    </location>
</feature>
<feature type="glycosylation site" description="N-linked (GlcNAc...) asparagine; by host" evidence="1">
    <location>
        <position position="421"/>
    </location>
</feature>
<feature type="glycosylation site" description="N-linked (GlcNAc...) asparagine; by host" evidence="1">
    <location>
        <position position="493"/>
    </location>
</feature>
<feature type="disulfide bond" description="Interchain (between HA1 and HA2 chains)" evidence="1">
    <location>
        <begin position="22"/>
        <end position="476"/>
    </location>
</feature>
<feature type="disulfide bond" evidence="1">
    <location>
        <begin position="72"/>
        <end position="84"/>
    </location>
</feature>
<feature type="disulfide bond" evidence="1">
    <location>
        <begin position="105"/>
        <end position="147"/>
    </location>
</feature>
<feature type="disulfide bond" evidence="1">
    <location>
        <begin position="483"/>
        <end position="487"/>
    </location>
</feature>
<feature type="sequence conflict" description="In Ref. 2; AAA43192 and 3; BAF02931." evidence="2" ref="2 3">
    <original>S</original>
    <variation>C</variation>
    <location>
        <position position="60"/>
    </location>
</feature>
<feature type="sequence conflict" description="In Ref. 2; AAA43192." evidence="2" ref="2">
    <original>S</original>
    <variation>L</variation>
    <location>
        <position position="92"/>
    </location>
</feature>
<feature type="sequence conflict" description="In Ref. 2; AAA43192." evidence="2" ref="2">
    <original>D</original>
    <variation>N</variation>
    <location>
        <position position="103"/>
    </location>
</feature>
<feature type="sequence conflict" description="In Ref. 3; BAF02931." evidence="2" ref="3">
    <original>A</original>
    <variation>S</variation>
    <location>
        <position position="152"/>
    </location>
</feature>
<feature type="sequence conflict" description="In Ref. 3; BAF02931." evidence="2" ref="3">
    <original>S</original>
    <variation>P</variation>
    <location>
        <position position="216"/>
    </location>
</feature>
<feature type="sequence conflict" description="In Ref. 3; BAF02931." evidence="2" ref="3">
    <original>V</original>
    <variation>C</variation>
    <location>
        <position position="314"/>
    </location>
</feature>
<feature type="sequence conflict" description="In Ref. 3; BAF02931." evidence="2" ref="3">
    <original>Q</original>
    <variation>P</variation>
    <location>
        <position position="381"/>
    </location>
</feature>
<feature type="sequence conflict" description="In Ref. 3; BAF02931." evidence="2" ref="3">
    <original>A</original>
    <variation>E</variation>
    <location>
        <position position="408"/>
    </location>
</feature>
<proteinExistence type="inferred from homology"/>
<name>HEMA_I71A2</name>
<keyword id="KW-1167">Clathrin- and caveolin-independent endocytosis of virus by host</keyword>
<keyword id="KW-1165">Clathrin-mediated endocytosis of virus by host</keyword>
<keyword id="KW-1015">Disulfide bond</keyword>
<keyword id="KW-1170">Fusion of virus membrane with host endosomal membrane</keyword>
<keyword id="KW-1168">Fusion of virus membrane with host membrane</keyword>
<keyword id="KW-0325">Glycoprotein</keyword>
<keyword id="KW-0348">Hemagglutinin</keyword>
<keyword id="KW-1032">Host cell membrane</keyword>
<keyword id="KW-1043">Host membrane</keyword>
<keyword id="KW-0945">Host-virus interaction</keyword>
<keyword id="KW-0449">Lipoprotein</keyword>
<keyword id="KW-0472">Membrane</keyword>
<keyword id="KW-0564">Palmitate</keyword>
<keyword id="KW-0732">Signal</keyword>
<keyword id="KW-0812">Transmembrane</keyword>
<keyword id="KW-1133">Transmembrane helix</keyword>
<keyword id="KW-1161">Viral attachment to host cell</keyword>
<keyword id="KW-0261">Viral envelope protein</keyword>
<keyword id="KW-1162">Viral penetration into host cytoplasm</keyword>
<keyword id="KW-0946">Virion</keyword>
<keyword id="KW-1164">Virus endocytosis by host</keyword>
<keyword id="KW-1160">Virus entry into host cell</keyword>